<name>SECA_STRP1</name>
<dbReference type="EC" id="7.4.2.8" evidence="1"/>
<dbReference type="EMBL" id="AE004092">
    <property type="protein sequence ID" value="AAK34534.1"/>
    <property type="molecule type" value="Genomic_DNA"/>
</dbReference>
<dbReference type="EMBL" id="CP000017">
    <property type="protein sequence ID" value="AAZ52152.1"/>
    <property type="molecule type" value="Genomic_DNA"/>
</dbReference>
<dbReference type="RefSeq" id="NP_269813.1">
    <property type="nucleotide sequence ID" value="NC_002737.2"/>
</dbReference>
<dbReference type="SMR" id="Q99Y96"/>
<dbReference type="PaxDb" id="1314-HKU360_01585"/>
<dbReference type="KEGG" id="spy:SPy_1805"/>
<dbReference type="KEGG" id="spz:M5005_Spy1534"/>
<dbReference type="PATRIC" id="fig|160490.10.peg.1570"/>
<dbReference type="HOGENOM" id="CLU_005314_3_0_9"/>
<dbReference type="OMA" id="MVHYDVQ"/>
<dbReference type="Proteomes" id="UP000000750">
    <property type="component" value="Chromosome"/>
</dbReference>
<dbReference type="GO" id="GO:0031522">
    <property type="term" value="C:cell envelope Sec protein transport complex"/>
    <property type="evidence" value="ECO:0007669"/>
    <property type="project" value="TreeGrafter"/>
</dbReference>
<dbReference type="GO" id="GO:0005829">
    <property type="term" value="C:cytosol"/>
    <property type="evidence" value="ECO:0007669"/>
    <property type="project" value="TreeGrafter"/>
</dbReference>
<dbReference type="GO" id="GO:0005886">
    <property type="term" value="C:plasma membrane"/>
    <property type="evidence" value="ECO:0007669"/>
    <property type="project" value="UniProtKB-SubCell"/>
</dbReference>
<dbReference type="GO" id="GO:0005524">
    <property type="term" value="F:ATP binding"/>
    <property type="evidence" value="ECO:0007669"/>
    <property type="project" value="UniProtKB-UniRule"/>
</dbReference>
<dbReference type="GO" id="GO:0046872">
    <property type="term" value="F:metal ion binding"/>
    <property type="evidence" value="ECO:0007669"/>
    <property type="project" value="UniProtKB-KW"/>
</dbReference>
<dbReference type="GO" id="GO:0008564">
    <property type="term" value="F:protein-exporting ATPase activity"/>
    <property type="evidence" value="ECO:0007669"/>
    <property type="project" value="UniProtKB-EC"/>
</dbReference>
<dbReference type="GO" id="GO:0065002">
    <property type="term" value="P:intracellular protein transmembrane transport"/>
    <property type="evidence" value="ECO:0007669"/>
    <property type="project" value="UniProtKB-UniRule"/>
</dbReference>
<dbReference type="GO" id="GO:0017038">
    <property type="term" value="P:protein import"/>
    <property type="evidence" value="ECO:0007669"/>
    <property type="project" value="InterPro"/>
</dbReference>
<dbReference type="GO" id="GO:0006605">
    <property type="term" value="P:protein targeting"/>
    <property type="evidence" value="ECO:0007669"/>
    <property type="project" value="UniProtKB-UniRule"/>
</dbReference>
<dbReference type="GO" id="GO:0043952">
    <property type="term" value="P:protein transport by the Sec complex"/>
    <property type="evidence" value="ECO:0007669"/>
    <property type="project" value="TreeGrafter"/>
</dbReference>
<dbReference type="CDD" id="cd17928">
    <property type="entry name" value="DEXDc_SecA"/>
    <property type="match status" value="1"/>
</dbReference>
<dbReference type="CDD" id="cd18803">
    <property type="entry name" value="SF2_C_secA"/>
    <property type="match status" value="1"/>
</dbReference>
<dbReference type="FunFam" id="1.10.3060.10:FF:000002">
    <property type="entry name" value="Preprotein translocase subunit SecA"/>
    <property type="match status" value="1"/>
</dbReference>
<dbReference type="FunFam" id="3.40.50.300:FF:000429">
    <property type="entry name" value="Preprotein translocase subunit SecA"/>
    <property type="match status" value="1"/>
</dbReference>
<dbReference type="FunFam" id="3.90.1440.10:FF:000001">
    <property type="entry name" value="Preprotein translocase subunit SecA"/>
    <property type="match status" value="1"/>
</dbReference>
<dbReference type="Gene3D" id="1.10.3060.10">
    <property type="entry name" value="Helical scaffold and wing domains of SecA"/>
    <property type="match status" value="1"/>
</dbReference>
<dbReference type="Gene3D" id="3.40.50.300">
    <property type="entry name" value="P-loop containing nucleotide triphosphate hydrolases"/>
    <property type="match status" value="3"/>
</dbReference>
<dbReference type="Gene3D" id="3.90.1440.10">
    <property type="entry name" value="SecA, preprotein cross-linking domain"/>
    <property type="match status" value="1"/>
</dbReference>
<dbReference type="HAMAP" id="MF_01382">
    <property type="entry name" value="SecA"/>
    <property type="match status" value="1"/>
</dbReference>
<dbReference type="InterPro" id="IPR014001">
    <property type="entry name" value="Helicase_ATP-bd"/>
</dbReference>
<dbReference type="InterPro" id="IPR001650">
    <property type="entry name" value="Helicase_C-like"/>
</dbReference>
<dbReference type="InterPro" id="IPR027417">
    <property type="entry name" value="P-loop_NTPase"/>
</dbReference>
<dbReference type="InterPro" id="IPR004027">
    <property type="entry name" value="SEC_C_motif"/>
</dbReference>
<dbReference type="InterPro" id="IPR000185">
    <property type="entry name" value="SecA"/>
</dbReference>
<dbReference type="InterPro" id="IPR020937">
    <property type="entry name" value="SecA_CS"/>
</dbReference>
<dbReference type="InterPro" id="IPR011115">
    <property type="entry name" value="SecA_DEAD"/>
</dbReference>
<dbReference type="InterPro" id="IPR014018">
    <property type="entry name" value="SecA_motor_DEAD"/>
</dbReference>
<dbReference type="InterPro" id="IPR011130">
    <property type="entry name" value="SecA_preprotein_X-link_dom"/>
</dbReference>
<dbReference type="InterPro" id="IPR044722">
    <property type="entry name" value="SecA_SF2_C"/>
</dbReference>
<dbReference type="InterPro" id="IPR011116">
    <property type="entry name" value="SecA_Wing/Scaffold"/>
</dbReference>
<dbReference type="InterPro" id="IPR036266">
    <property type="entry name" value="SecA_Wing/Scaffold_sf"/>
</dbReference>
<dbReference type="InterPro" id="IPR036670">
    <property type="entry name" value="SecA_X-link_sf"/>
</dbReference>
<dbReference type="NCBIfam" id="NF006630">
    <property type="entry name" value="PRK09200.1"/>
    <property type="match status" value="1"/>
</dbReference>
<dbReference type="NCBIfam" id="TIGR00963">
    <property type="entry name" value="secA"/>
    <property type="match status" value="1"/>
</dbReference>
<dbReference type="PANTHER" id="PTHR30612:SF0">
    <property type="entry name" value="CHLOROPLAST PROTEIN-TRANSPORTING ATPASE"/>
    <property type="match status" value="1"/>
</dbReference>
<dbReference type="PANTHER" id="PTHR30612">
    <property type="entry name" value="SECA INNER MEMBRANE COMPONENT OF SEC PROTEIN SECRETION SYSTEM"/>
    <property type="match status" value="1"/>
</dbReference>
<dbReference type="Pfam" id="PF21090">
    <property type="entry name" value="P-loop_SecA"/>
    <property type="match status" value="2"/>
</dbReference>
<dbReference type="Pfam" id="PF02810">
    <property type="entry name" value="SEC-C"/>
    <property type="match status" value="1"/>
</dbReference>
<dbReference type="Pfam" id="PF07517">
    <property type="entry name" value="SecA_DEAD"/>
    <property type="match status" value="1"/>
</dbReference>
<dbReference type="Pfam" id="PF01043">
    <property type="entry name" value="SecA_PP_bind"/>
    <property type="match status" value="1"/>
</dbReference>
<dbReference type="Pfam" id="PF07516">
    <property type="entry name" value="SecA_SW"/>
    <property type="match status" value="1"/>
</dbReference>
<dbReference type="PRINTS" id="PR00906">
    <property type="entry name" value="SECA"/>
</dbReference>
<dbReference type="SMART" id="SM00957">
    <property type="entry name" value="SecA_DEAD"/>
    <property type="match status" value="1"/>
</dbReference>
<dbReference type="SMART" id="SM00958">
    <property type="entry name" value="SecA_PP_bind"/>
    <property type="match status" value="1"/>
</dbReference>
<dbReference type="SUPFAM" id="SSF81886">
    <property type="entry name" value="Helical scaffold and wing domains of SecA"/>
    <property type="match status" value="1"/>
</dbReference>
<dbReference type="SUPFAM" id="SSF52540">
    <property type="entry name" value="P-loop containing nucleoside triphosphate hydrolases"/>
    <property type="match status" value="2"/>
</dbReference>
<dbReference type="SUPFAM" id="SSF81767">
    <property type="entry name" value="Pre-protein crosslinking domain of SecA"/>
    <property type="match status" value="1"/>
</dbReference>
<dbReference type="PROSITE" id="PS01312">
    <property type="entry name" value="SECA"/>
    <property type="match status" value="1"/>
</dbReference>
<dbReference type="PROSITE" id="PS51196">
    <property type="entry name" value="SECA_MOTOR_DEAD"/>
    <property type="match status" value="1"/>
</dbReference>
<feature type="chain" id="PRO_0000318446" description="Protein translocase subunit SecA">
    <location>
        <begin position="1"/>
        <end position="839"/>
    </location>
</feature>
<feature type="region of interest" description="Disordered" evidence="2">
    <location>
        <begin position="780"/>
        <end position="839"/>
    </location>
</feature>
<feature type="compositionally biased region" description="Basic and acidic residues" evidence="2">
    <location>
        <begin position="780"/>
        <end position="790"/>
    </location>
</feature>
<feature type="compositionally biased region" description="Polar residues" evidence="2">
    <location>
        <begin position="791"/>
        <end position="809"/>
    </location>
</feature>
<feature type="compositionally biased region" description="Basic residues" evidence="2">
    <location>
        <begin position="827"/>
        <end position="839"/>
    </location>
</feature>
<feature type="binding site" evidence="1">
    <location>
        <position position="85"/>
    </location>
    <ligand>
        <name>ATP</name>
        <dbReference type="ChEBI" id="CHEBI:30616"/>
    </ligand>
</feature>
<feature type="binding site" evidence="1">
    <location>
        <begin position="103"/>
        <end position="107"/>
    </location>
    <ligand>
        <name>ATP</name>
        <dbReference type="ChEBI" id="CHEBI:30616"/>
    </ligand>
</feature>
<feature type="binding site" evidence="1">
    <location>
        <position position="493"/>
    </location>
    <ligand>
        <name>ATP</name>
        <dbReference type="ChEBI" id="CHEBI:30616"/>
    </ligand>
</feature>
<feature type="binding site" evidence="1">
    <location>
        <position position="821"/>
    </location>
    <ligand>
        <name>Zn(2+)</name>
        <dbReference type="ChEBI" id="CHEBI:29105"/>
    </ligand>
</feature>
<feature type="binding site" evidence="1">
    <location>
        <position position="823"/>
    </location>
    <ligand>
        <name>Zn(2+)</name>
        <dbReference type="ChEBI" id="CHEBI:29105"/>
    </ligand>
</feature>
<feature type="binding site" evidence="1">
    <location>
        <position position="832"/>
    </location>
    <ligand>
        <name>Zn(2+)</name>
        <dbReference type="ChEBI" id="CHEBI:29105"/>
    </ligand>
</feature>
<feature type="binding site" evidence="1">
    <location>
        <position position="833"/>
    </location>
    <ligand>
        <name>Zn(2+)</name>
        <dbReference type="ChEBI" id="CHEBI:29105"/>
    </ligand>
</feature>
<feature type="sequence conflict" description="In Ref. 2; AAZ52152." evidence="3" ref="2">
    <original>F</original>
    <variation>S</variation>
    <location>
        <position position="670"/>
    </location>
</feature>
<sequence length="839" mass="94765">MANILRKVIENDKGELRKLEKIAKKVESYADQMASLSDRDLQGKTLEFKERYQKGETLEQLLPEAFAVVREAAKRVLGLFPYRVQIMGGIVLHNGDVPEMRTGEGKTLTATMPVYLNAIAGEGVHVITVNEYLSTRDATEMGEVYSWLGLSVGINLAAKSPAEKREAYNCDITYSTNSEVGFDYLRDNMVVRQEDMVQRPLNFALVDEVDSVLIDEARTPLIVSGAVSSETNQLYIRADMFVKTLTSVDYVIDVPTKTIGLSDSGIDKAESYFNLSNLYDIENVALTHFIDNALRANYIMLLDIDYVVSEDGEILIVDQFTGRTMEGRRFSDGLHQAIEAKEGVRIQEESKTSASITYQNMFRMYKKLAGMTGTAKTEEEEFREVYNMRIIPIPTNRPIARIDHTDLLYPTLESKFRAVVEDVKTRHAKGQPILVGTVAVETSDLISRKLVEAGIPHEVLNAKNHFKEAQIIMNAGQRGAVTIATNMAGRGTDIKLGEGVRELGGLCVIGTERHESRRIDNQLRGRSGRQGDPGESQFYLSLEDDLMRRFGSDRIKAFLDRMKLDEEDTVIKSGMLGRQVESAQKRVEGNNYDTRKQVLQYDDVMREQREIIYANRRDVITANRDLGPEIKAMIKRTIDRAVDAHARSNRKDAIDAIVTFARTSLVPEEFISAKELRGLKDDQIKEKLYQRALAIYDQQLSKLRDQEAIIEFQKVLILMIVDNKWTEHIDALDQLRNAVGLRGYAQNNPVVEYQAEGFKMFQDMIGAIEFDVTRTMMKAQIHEQERERASQRATTAAPQNIQSQQSANTDDLPKVERNEACPCGSGKKFKNCHGRKSFS</sequence>
<organism>
    <name type="scientific">Streptococcus pyogenes serotype M1</name>
    <dbReference type="NCBI Taxonomy" id="301447"/>
    <lineage>
        <taxon>Bacteria</taxon>
        <taxon>Bacillati</taxon>
        <taxon>Bacillota</taxon>
        <taxon>Bacilli</taxon>
        <taxon>Lactobacillales</taxon>
        <taxon>Streptococcaceae</taxon>
        <taxon>Streptococcus</taxon>
    </lineage>
</organism>
<evidence type="ECO:0000255" key="1">
    <source>
        <dbReference type="HAMAP-Rule" id="MF_01382"/>
    </source>
</evidence>
<evidence type="ECO:0000256" key="2">
    <source>
        <dbReference type="SAM" id="MobiDB-lite"/>
    </source>
</evidence>
<evidence type="ECO:0000305" key="3"/>
<protein>
    <recommendedName>
        <fullName evidence="1">Protein translocase subunit SecA</fullName>
        <ecNumber evidence="1">7.4.2.8</ecNumber>
    </recommendedName>
</protein>
<reference key="1">
    <citation type="journal article" date="2001" name="Proc. Natl. Acad. Sci. U.S.A.">
        <title>Complete genome sequence of an M1 strain of Streptococcus pyogenes.</title>
        <authorList>
            <person name="Ferretti J.J."/>
            <person name="McShan W.M."/>
            <person name="Ajdic D.J."/>
            <person name="Savic D.J."/>
            <person name="Savic G."/>
            <person name="Lyon K."/>
            <person name="Primeaux C."/>
            <person name="Sezate S."/>
            <person name="Suvorov A.N."/>
            <person name="Kenton S."/>
            <person name="Lai H.S."/>
            <person name="Lin S.P."/>
            <person name="Qian Y."/>
            <person name="Jia H.G."/>
            <person name="Najar F.Z."/>
            <person name="Ren Q."/>
            <person name="Zhu H."/>
            <person name="Song L."/>
            <person name="White J."/>
            <person name="Yuan X."/>
            <person name="Clifton S.W."/>
            <person name="Roe B.A."/>
            <person name="McLaughlin R.E."/>
        </authorList>
    </citation>
    <scope>NUCLEOTIDE SEQUENCE [LARGE SCALE GENOMIC DNA]</scope>
    <source>
        <strain>ATCC 700294 / SF370 / Serotype M1</strain>
    </source>
</reference>
<reference key="2">
    <citation type="journal article" date="2005" name="J. Infect. Dis.">
        <title>Evolutionary origin and emergence of a highly successful clone of serotype M1 group A Streptococcus involved multiple horizontal gene transfer events.</title>
        <authorList>
            <person name="Sumby P."/>
            <person name="Porcella S.F."/>
            <person name="Madrigal A.G."/>
            <person name="Barbian K.D."/>
            <person name="Virtaneva K."/>
            <person name="Ricklefs S.M."/>
            <person name="Sturdevant D.E."/>
            <person name="Graham M.R."/>
            <person name="Vuopio-Varkila J."/>
            <person name="Hoe N.P."/>
            <person name="Musser J.M."/>
        </authorList>
    </citation>
    <scope>NUCLEOTIDE SEQUENCE [LARGE SCALE GENOMIC DNA]</scope>
    <source>
        <strain>ATCC BAA-947 / MGAS5005 / Serotype M1</strain>
    </source>
</reference>
<keyword id="KW-0067">ATP-binding</keyword>
<keyword id="KW-1003">Cell membrane</keyword>
<keyword id="KW-0963">Cytoplasm</keyword>
<keyword id="KW-0472">Membrane</keyword>
<keyword id="KW-0479">Metal-binding</keyword>
<keyword id="KW-0547">Nucleotide-binding</keyword>
<keyword id="KW-0653">Protein transport</keyword>
<keyword id="KW-1185">Reference proteome</keyword>
<keyword id="KW-1278">Translocase</keyword>
<keyword id="KW-0811">Translocation</keyword>
<keyword id="KW-0813">Transport</keyword>
<keyword id="KW-0862">Zinc</keyword>
<proteinExistence type="inferred from homology"/>
<comment type="function">
    <text evidence="1">Part of the Sec protein translocase complex. Interacts with the SecYEG preprotein conducting channel. Has a central role in coupling the hydrolysis of ATP to the transfer of proteins into and across the cell membrane, serving as an ATP-driven molecular motor driving the stepwise translocation of polypeptide chains across the membrane.</text>
</comment>
<comment type="catalytic activity">
    <reaction evidence="1">
        <text>ATP + H2O + cellular proteinSide 1 = ADP + phosphate + cellular proteinSide 2.</text>
        <dbReference type="EC" id="7.4.2.8"/>
    </reaction>
</comment>
<comment type="cofactor">
    <cofactor evidence="1">
        <name>Zn(2+)</name>
        <dbReference type="ChEBI" id="CHEBI:29105"/>
    </cofactor>
    <text evidence="1">May bind 1 zinc ion per subunit.</text>
</comment>
<comment type="subunit">
    <text evidence="1">Monomer and homodimer. Part of the essential Sec protein translocation apparatus which comprises SecA, SecYEG and auxiliary proteins SecDF. Other proteins may also be involved.</text>
</comment>
<comment type="subcellular location">
    <subcellularLocation>
        <location evidence="1">Cell membrane</location>
        <topology evidence="1">Peripheral membrane protein</topology>
        <orientation evidence="1">Cytoplasmic side</orientation>
    </subcellularLocation>
    <subcellularLocation>
        <location evidence="1">Cytoplasm</location>
    </subcellularLocation>
    <text evidence="1">Distribution is 50-50.</text>
</comment>
<comment type="similarity">
    <text evidence="1">Belongs to the SecA family.</text>
</comment>
<gene>
    <name evidence="1" type="primary">secA</name>
    <name type="ordered locus">SPy_1805</name>
    <name type="ordered locus">M5005_Spy1534</name>
</gene>
<accession>Q99Y96</accession>
<accession>Q48WX3</accession>